<keyword id="KW-0963">Cytoplasm</keyword>
<keyword id="KW-1185">Reference proteome</keyword>
<keyword id="KW-0694">RNA-binding</keyword>
<name>SSRP_MALP2</name>
<protein>
    <recommendedName>
        <fullName evidence="1">SsrA-binding protein</fullName>
    </recommendedName>
    <alternativeName>
        <fullName evidence="1">Small protein B</fullName>
    </alternativeName>
</protein>
<organism>
    <name type="scientific">Malacoplasma penetrans (strain HF-2)</name>
    <name type="common">Mycoplasma penetrans</name>
    <dbReference type="NCBI Taxonomy" id="272633"/>
    <lineage>
        <taxon>Bacteria</taxon>
        <taxon>Bacillati</taxon>
        <taxon>Mycoplasmatota</taxon>
        <taxon>Mycoplasmoidales</taxon>
        <taxon>Mycoplasmoidaceae</taxon>
        <taxon>Malacoplasma</taxon>
    </lineage>
</organism>
<sequence length="146" mass="17317">MKILVVNKKLHFNYEVLEKIEAGIELKGVEVKSIHLNNANISDSYVIFKRNEAYILNMNIAPYSHGNIYNVDPLRTRKLLLHKNEIIKYQMRIKKESLTMVPSKIYWRKNKLKVEIALAKGKKQFDKRQTIKDRDNSREARKHIRV</sequence>
<accession>Q8EW52</accession>
<dbReference type="EMBL" id="BA000026">
    <property type="protein sequence ID" value="BAC44144.1"/>
    <property type="molecule type" value="Genomic_DNA"/>
</dbReference>
<dbReference type="SMR" id="Q8EW52"/>
<dbReference type="FunCoup" id="Q8EW52">
    <property type="interactions" value="145"/>
</dbReference>
<dbReference type="STRING" id="272633.gene:10731465"/>
<dbReference type="KEGG" id="mpe:MYPE3530"/>
<dbReference type="eggNOG" id="COG0691">
    <property type="taxonomic scope" value="Bacteria"/>
</dbReference>
<dbReference type="HOGENOM" id="CLU_108953_0_1_14"/>
<dbReference type="InParanoid" id="Q8EW52"/>
<dbReference type="Proteomes" id="UP000002522">
    <property type="component" value="Chromosome"/>
</dbReference>
<dbReference type="GO" id="GO:0005829">
    <property type="term" value="C:cytosol"/>
    <property type="evidence" value="ECO:0007669"/>
    <property type="project" value="TreeGrafter"/>
</dbReference>
<dbReference type="GO" id="GO:0003723">
    <property type="term" value="F:RNA binding"/>
    <property type="evidence" value="ECO:0007669"/>
    <property type="project" value="UniProtKB-UniRule"/>
</dbReference>
<dbReference type="GO" id="GO:0070929">
    <property type="term" value="P:trans-translation"/>
    <property type="evidence" value="ECO:0007669"/>
    <property type="project" value="UniProtKB-UniRule"/>
</dbReference>
<dbReference type="CDD" id="cd09294">
    <property type="entry name" value="SmpB"/>
    <property type="match status" value="1"/>
</dbReference>
<dbReference type="Gene3D" id="2.40.280.10">
    <property type="match status" value="1"/>
</dbReference>
<dbReference type="HAMAP" id="MF_00023">
    <property type="entry name" value="SmpB"/>
    <property type="match status" value="1"/>
</dbReference>
<dbReference type="InterPro" id="IPR023620">
    <property type="entry name" value="SmpB"/>
</dbReference>
<dbReference type="InterPro" id="IPR000037">
    <property type="entry name" value="SsrA-bd_prot"/>
</dbReference>
<dbReference type="InterPro" id="IPR020081">
    <property type="entry name" value="SsrA-bd_prot_CS"/>
</dbReference>
<dbReference type="NCBIfam" id="NF003843">
    <property type="entry name" value="PRK05422.1"/>
    <property type="match status" value="1"/>
</dbReference>
<dbReference type="NCBIfam" id="TIGR00086">
    <property type="entry name" value="smpB"/>
    <property type="match status" value="1"/>
</dbReference>
<dbReference type="PANTHER" id="PTHR30308:SF2">
    <property type="entry name" value="SSRA-BINDING PROTEIN"/>
    <property type="match status" value="1"/>
</dbReference>
<dbReference type="PANTHER" id="PTHR30308">
    <property type="entry name" value="TMRNA-BINDING COMPONENT OF TRANS-TRANSLATION TAGGING COMPLEX"/>
    <property type="match status" value="1"/>
</dbReference>
<dbReference type="Pfam" id="PF01668">
    <property type="entry name" value="SmpB"/>
    <property type="match status" value="1"/>
</dbReference>
<dbReference type="SUPFAM" id="SSF74982">
    <property type="entry name" value="Small protein B (SmpB)"/>
    <property type="match status" value="1"/>
</dbReference>
<dbReference type="PROSITE" id="PS01317">
    <property type="entry name" value="SSRP"/>
    <property type="match status" value="1"/>
</dbReference>
<evidence type="ECO:0000255" key="1">
    <source>
        <dbReference type="HAMAP-Rule" id="MF_00023"/>
    </source>
</evidence>
<evidence type="ECO:0000256" key="2">
    <source>
        <dbReference type="SAM" id="MobiDB-lite"/>
    </source>
</evidence>
<proteinExistence type="inferred from homology"/>
<feature type="chain" id="PRO_0000102988" description="SsrA-binding protein">
    <location>
        <begin position="1"/>
        <end position="146"/>
    </location>
</feature>
<feature type="region of interest" description="Disordered" evidence="2">
    <location>
        <begin position="127"/>
        <end position="146"/>
    </location>
</feature>
<feature type="compositionally biased region" description="Basic and acidic residues" evidence="2">
    <location>
        <begin position="127"/>
        <end position="139"/>
    </location>
</feature>
<reference key="1">
    <citation type="journal article" date="2002" name="Nucleic Acids Res.">
        <title>The complete genomic sequence of Mycoplasma penetrans, an intracellular bacterial pathogen in humans.</title>
        <authorList>
            <person name="Sasaki Y."/>
            <person name="Ishikawa J."/>
            <person name="Yamashita A."/>
            <person name="Oshima K."/>
            <person name="Kenri T."/>
            <person name="Furuya K."/>
            <person name="Yoshino C."/>
            <person name="Horino A."/>
            <person name="Shiba T."/>
            <person name="Sasaki T."/>
            <person name="Hattori M."/>
        </authorList>
    </citation>
    <scope>NUCLEOTIDE SEQUENCE [LARGE SCALE GENOMIC DNA]</scope>
    <source>
        <strain>HF-2</strain>
    </source>
</reference>
<comment type="function">
    <text evidence="1">Required for rescue of stalled ribosomes mediated by trans-translation. Binds to transfer-messenger RNA (tmRNA), required for stable association of tmRNA with ribosomes. tmRNA and SmpB together mimic tRNA shape, replacing the anticodon stem-loop with SmpB. tmRNA is encoded by the ssrA gene; the 2 termini fold to resemble tRNA(Ala) and it encodes a 'tag peptide', a short internal open reading frame. During trans-translation Ala-aminoacylated tmRNA acts like a tRNA, entering the A-site of stalled ribosomes, displacing the stalled mRNA. The ribosome then switches to translate the ORF on the tmRNA; the nascent peptide is terminated with the 'tag peptide' encoded by the tmRNA and targeted for degradation. The ribosome is freed to recommence translation, which seems to be the essential function of trans-translation.</text>
</comment>
<comment type="subcellular location">
    <subcellularLocation>
        <location evidence="1">Cytoplasm</location>
    </subcellularLocation>
    <text evidence="1">The tmRNA-SmpB complex associates with stalled 70S ribosomes.</text>
</comment>
<comment type="similarity">
    <text evidence="1">Belongs to the SmpB family.</text>
</comment>
<gene>
    <name evidence="1" type="primary">smpB</name>
    <name type="ordered locus">MYPE3530</name>
</gene>